<reference key="1">
    <citation type="journal article" date="2009" name="PLoS Biol.">
        <title>Lineage-specific biology revealed by a finished genome assembly of the mouse.</title>
        <authorList>
            <person name="Church D.M."/>
            <person name="Goodstadt L."/>
            <person name="Hillier L.W."/>
            <person name="Zody M.C."/>
            <person name="Goldstein S."/>
            <person name="She X."/>
            <person name="Bult C.J."/>
            <person name="Agarwala R."/>
            <person name="Cherry J.L."/>
            <person name="DiCuccio M."/>
            <person name="Hlavina W."/>
            <person name="Kapustin Y."/>
            <person name="Meric P."/>
            <person name="Maglott D."/>
            <person name="Birtle Z."/>
            <person name="Marques A.C."/>
            <person name="Graves T."/>
            <person name="Zhou S."/>
            <person name="Teague B."/>
            <person name="Potamousis K."/>
            <person name="Churas C."/>
            <person name="Place M."/>
            <person name="Herschleb J."/>
            <person name="Runnheim R."/>
            <person name="Forrest D."/>
            <person name="Amos-Landgraf J."/>
            <person name="Schwartz D.C."/>
            <person name="Cheng Z."/>
            <person name="Lindblad-Toh K."/>
            <person name="Eichler E.E."/>
            <person name="Ponting C.P."/>
        </authorList>
    </citation>
    <scope>NUCLEOTIDE SEQUENCE [LARGE SCALE GENOMIC DNA]</scope>
    <source>
        <strain>C57BL/6J</strain>
    </source>
</reference>
<reference evidence="8 9" key="2">
    <citation type="journal article" date="2005" name="Science">
        <title>The transcriptional landscape of the mammalian genome.</title>
        <authorList>
            <person name="Carninci P."/>
            <person name="Kasukawa T."/>
            <person name="Katayama S."/>
            <person name="Gough J."/>
            <person name="Frith M.C."/>
            <person name="Maeda N."/>
            <person name="Oyama R."/>
            <person name="Ravasi T."/>
            <person name="Lenhard B."/>
            <person name="Wells C."/>
            <person name="Kodzius R."/>
            <person name="Shimokawa K."/>
            <person name="Bajic V.B."/>
            <person name="Brenner S.E."/>
            <person name="Batalov S."/>
            <person name="Forrest A.R."/>
            <person name="Zavolan M."/>
            <person name="Davis M.J."/>
            <person name="Wilming L.G."/>
            <person name="Aidinis V."/>
            <person name="Allen J.E."/>
            <person name="Ambesi-Impiombato A."/>
            <person name="Apweiler R."/>
            <person name="Aturaliya R.N."/>
            <person name="Bailey T.L."/>
            <person name="Bansal M."/>
            <person name="Baxter L."/>
            <person name="Beisel K.W."/>
            <person name="Bersano T."/>
            <person name="Bono H."/>
            <person name="Chalk A.M."/>
            <person name="Chiu K.P."/>
            <person name="Choudhary V."/>
            <person name="Christoffels A."/>
            <person name="Clutterbuck D.R."/>
            <person name="Crowe M.L."/>
            <person name="Dalla E."/>
            <person name="Dalrymple B.P."/>
            <person name="de Bono B."/>
            <person name="Della Gatta G."/>
            <person name="di Bernardo D."/>
            <person name="Down T."/>
            <person name="Engstrom P."/>
            <person name="Fagiolini M."/>
            <person name="Faulkner G."/>
            <person name="Fletcher C.F."/>
            <person name="Fukushima T."/>
            <person name="Furuno M."/>
            <person name="Futaki S."/>
            <person name="Gariboldi M."/>
            <person name="Georgii-Hemming P."/>
            <person name="Gingeras T.R."/>
            <person name="Gojobori T."/>
            <person name="Green R.E."/>
            <person name="Gustincich S."/>
            <person name="Harbers M."/>
            <person name="Hayashi Y."/>
            <person name="Hensch T.K."/>
            <person name="Hirokawa N."/>
            <person name="Hill D."/>
            <person name="Huminiecki L."/>
            <person name="Iacono M."/>
            <person name="Ikeo K."/>
            <person name="Iwama A."/>
            <person name="Ishikawa T."/>
            <person name="Jakt M."/>
            <person name="Kanapin A."/>
            <person name="Katoh M."/>
            <person name="Kawasawa Y."/>
            <person name="Kelso J."/>
            <person name="Kitamura H."/>
            <person name="Kitano H."/>
            <person name="Kollias G."/>
            <person name="Krishnan S.P."/>
            <person name="Kruger A."/>
            <person name="Kummerfeld S.K."/>
            <person name="Kurochkin I.V."/>
            <person name="Lareau L.F."/>
            <person name="Lazarevic D."/>
            <person name="Lipovich L."/>
            <person name="Liu J."/>
            <person name="Liuni S."/>
            <person name="McWilliam S."/>
            <person name="Madan Babu M."/>
            <person name="Madera M."/>
            <person name="Marchionni L."/>
            <person name="Matsuda H."/>
            <person name="Matsuzawa S."/>
            <person name="Miki H."/>
            <person name="Mignone F."/>
            <person name="Miyake S."/>
            <person name="Morris K."/>
            <person name="Mottagui-Tabar S."/>
            <person name="Mulder N."/>
            <person name="Nakano N."/>
            <person name="Nakauchi H."/>
            <person name="Ng P."/>
            <person name="Nilsson R."/>
            <person name="Nishiguchi S."/>
            <person name="Nishikawa S."/>
            <person name="Nori F."/>
            <person name="Ohara O."/>
            <person name="Okazaki Y."/>
            <person name="Orlando V."/>
            <person name="Pang K.C."/>
            <person name="Pavan W.J."/>
            <person name="Pavesi G."/>
            <person name="Pesole G."/>
            <person name="Petrovsky N."/>
            <person name="Piazza S."/>
            <person name="Reed J."/>
            <person name="Reid J.F."/>
            <person name="Ring B.Z."/>
            <person name="Ringwald M."/>
            <person name="Rost B."/>
            <person name="Ruan Y."/>
            <person name="Salzberg S.L."/>
            <person name="Sandelin A."/>
            <person name="Schneider C."/>
            <person name="Schoenbach C."/>
            <person name="Sekiguchi K."/>
            <person name="Semple C.A."/>
            <person name="Seno S."/>
            <person name="Sessa L."/>
            <person name="Sheng Y."/>
            <person name="Shibata Y."/>
            <person name="Shimada H."/>
            <person name="Shimada K."/>
            <person name="Silva D."/>
            <person name="Sinclair B."/>
            <person name="Sperling S."/>
            <person name="Stupka E."/>
            <person name="Sugiura K."/>
            <person name="Sultana R."/>
            <person name="Takenaka Y."/>
            <person name="Taki K."/>
            <person name="Tammoja K."/>
            <person name="Tan S.L."/>
            <person name="Tang S."/>
            <person name="Taylor M.S."/>
            <person name="Tegner J."/>
            <person name="Teichmann S.A."/>
            <person name="Ueda H.R."/>
            <person name="van Nimwegen E."/>
            <person name="Verardo R."/>
            <person name="Wei C.L."/>
            <person name="Yagi K."/>
            <person name="Yamanishi H."/>
            <person name="Zabarovsky E."/>
            <person name="Zhu S."/>
            <person name="Zimmer A."/>
            <person name="Hide W."/>
            <person name="Bult C."/>
            <person name="Grimmond S.M."/>
            <person name="Teasdale R.D."/>
            <person name="Liu E.T."/>
            <person name="Brusic V."/>
            <person name="Quackenbush J."/>
            <person name="Wahlestedt C."/>
            <person name="Mattick J.S."/>
            <person name="Hume D.A."/>
            <person name="Kai C."/>
            <person name="Sasaki D."/>
            <person name="Tomaru Y."/>
            <person name="Fukuda S."/>
            <person name="Kanamori-Katayama M."/>
            <person name="Suzuki M."/>
            <person name="Aoki J."/>
            <person name="Arakawa T."/>
            <person name="Iida J."/>
            <person name="Imamura K."/>
            <person name="Itoh M."/>
            <person name="Kato T."/>
            <person name="Kawaji H."/>
            <person name="Kawagashira N."/>
            <person name="Kawashima T."/>
            <person name="Kojima M."/>
            <person name="Kondo S."/>
            <person name="Konno H."/>
            <person name="Nakano K."/>
            <person name="Ninomiya N."/>
            <person name="Nishio T."/>
            <person name="Okada M."/>
            <person name="Plessy C."/>
            <person name="Shibata K."/>
            <person name="Shiraki T."/>
            <person name="Suzuki S."/>
            <person name="Tagami M."/>
            <person name="Waki K."/>
            <person name="Watahiki A."/>
            <person name="Okamura-Oho Y."/>
            <person name="Suzuki H."/>
            <person name="Kawai J."/>
            <person name="Hayashizaki Y."/>
        </authorList>
    </citation>
    <scope>NUCLEOTIDE SEQUENCE [LARGE SCALE MRNA] OF 1-924 (ISOFORM 3)</scope>
    <scope>NUCLEOTIDE SEQUENCE [LARGE SCALE MRNA] OF 1444-2010</scope>
    <scope>NUCLEOTIDE SEQUENCE [LARGE SCALE MRNA] OF 3040-3748 (ISOFORMS 1/3)</scope>
    <source>
        <strain evidence="9">C57BL/6J</strain>
        <tissue evidence="10">Cerebellum</tissue>
        <tissue evidence="9">Corpora quadrigemina</tissue>
        <tissue evidence="11">Embryo</tissue>
        <tissue evidence="13">Thymus</tissue>
    </source>
</reference>
<reference evidence="8 12" key="3">
    <citation type="journal article" date="2003" name="DNA Res.">
        <title>Prediction of the coding sequences of mouse homologues of KIAA gene: III. The complete nucleotide sequences of 500 mouse KIAA-homologous cDNAs identified by screening of terminal sequences of cDNA clones randomly sampled from size-fractionated libraries.</title>
        <authorList>
            <person name="Okazaki N."/>
            <person name="Kikuno R."/>
            <person name="Ohara R."/>
            <person name="Inamoto S."/>
            <person name="Koseki H."/>
            <person name="Hiraoka S."/>
            <person name="Saga Y."/>
            <person name="Nagase T."/>
            <person name="Ohara O."/>
            <person name="Koga H."/>
        </authorList>
    </citation>
    <scope>NUCLEOTIDE SEQUENCE [LARGE SCALE MRNA] OF 2868-3623 (ISOFORM 2)</scope>
    <source>
        <tissue evidence="12">Brain</tissue>
    </source>
</reference>
<reference key="4">
    <citation type="journal article" date="2007" name="Proc. Natl. Acad. Sci. U.S.A.">
        <title>Large-scale phosphorylation analysis of mouse liver.</title>
        <authorList>
            <person name="Villen J."/>
            <person name="Beausoleil S.A."/>
            <person name="Gerber S.A."/>
            <person name="Gygi S.P."/>
        </authorList>
    </citation>
    <scope>PHOSPHORYLATION [LARGE SCALE ANALYSIS] AT SER-736</scope>
    <scope>IDENTIFICATION BY MASS SPECTROMETRY [LARGE SCALE ANALYSIS]</scope>
    <source>
        <tissue>Liver</tissue>
    </source>
</reference>
<reference key="5">
    <citation type="journal article" date="2009" name="Immunity">
        <title>The phagosomal proteome in interferon-gamma-activated macrophages.</title>
        <authorList>
            <person name="Trost M."/>
            <person name="English L."/>
            <person name="Lemieux S."/>
            <person name="Courcelles M."/>
            <person name="Desjardins M."/>
            <person name="Thibault P."/>
        </authorList>
    </citation>
    <scope>IDENTIFICATION BY MASS SPECTROMETRY [LARGE SCALE ANALYSIS]</scope>
</reference>
<reference key="6">
    <citation type="journal article" date="2009" name="Mol. Cell. Proteomics">
        <title>Large scale localization of protein phosphorylation by use of electron capture dissociation mass spectrometry.</title>
        <authorList>
            <person name="Sweet S.M."/>
            <person name="Bailey C.M."/>
            <person name="Cunningham D.L."/>
            <person name="Heath J.K."/>
            <person name="Cooper H.J."/>
        </authorList>
    </citation>
    <scope>PHOSPHORYLATION [LARGE SCALE ANALYSIS] AT THR-1968 AND SER-1974</scope>
    <scope>IDENTIFICATION BY MASS SPECTROMETRY [LARGE SCALE ANALYSIS]</scope>
    <source>
        <tissue>Embryonic fibroblast</tissue>
    </source>
</reference>
<reference key="7">
    <citation type="journal article" date="2010" name="Cell">
        <title>A tissue-specific atlas of mouse protein phosphorylation and expression.</title>
        <authorList>
            <person name="Huttlin E.L."/>
            <person name="Jedrychowski M.P."/>
            <person name="Elias J.E."/>
            <person name="Goswami T."/>
            <person name="Rad R."/>
            <person name="Beausoleil S.A."/>
            <person name="Villen J."/>
            <person name="Haas W."/>
            <person name="Sowa M.E."/>
            <person name="Gygi S.P."/>
        </authorList>
    </citation>
    <scope>PHOSPHORYLATION [LARGE SCALE ANALYSIS] AT SER-132; SER-736; SER-871; SER-873 AND SER-2442</scope>
    <scope>IDENTIFICATION BY MASS SPECTROMETRY [LARGE SCALE ANALYSIS]</scope>
    <source>
        <tissue>Brain</tissue>
        <tissue>Brown adipose tissue</tissue>
        <tissue>Heart</tissue>
        <tissue>Kidney</tissue>
        <tissue>Liver</tissue>
        <tissue>Lung</tissue>
        <tissue>Pancreas</tissue>
        <tissue>Spleen</tissue>
        <tissue>Testis</tissue>
    </source>
</reference>
<reference key="8">
    <citation type="journal article" date="2014" name="Mol. Cell. Proteomics">
        <title>Immunoaffinity enrichment and mass spectrometry analysis of protein methylation.</title>
        <authorList>
            <person name="Guo A."/>
            <person name="Gu H."/>
            <person name="Zhou J."/>
            <person name="Mulhern D."/>
            <person name="Wang Y."/>
            <person name="Lee K.A."/>
            <person name="Yang V."/>
            <person name="Aguiar M."/>
            <person name="Kornhauser J."/>
            <person name="Jia X."/>
            <person name="Ren J."/>
            <person name="Beausoleil S.A."/>
            <person name="Silva J.C."/>
            <person name="Vemulapalli V."/>
            <person name="Bedford M.T."/>
            <person name="Comb M.J."/>
        </authorList>
    </citation>
    <scope>METHYLATION [LARGE SCALE ANALYSIS] AT ARG-3514</scope>
    <scope>IDENTIFICATION BY MASS SPECTROMETRY [LARGE SCALE ANALYSIS]</scope>
    <source>
        <tissue>Brain</tissue>
    </source>
</reference>
<accession>Q8BX70</accession>
<accession>Q3V3W5</accession>
<accession>Q6ZPE1</accession>
<accession>Q8BLB1</accession>
<accession>Q8BQI7</accession>
<proteinExistence type="evidence at protein level"/>
<dbReference type="EMBL" id="AC156799">
    <property type="status" value="NOT_ANNOTATED_CDS"/>
    <property type="molecule type" value="Genomic_DNA"/>
</dbReference>
<dbReference type="EMBL" id="AK030931">
    <property type="protein sequence ID" value="BAE20465.1"/>
    <property type="status" value="ALT_INIT"/>
    <property type="molecule type" value="mRNA"/>
</dbReference>
<dbReference type="EMBL" id="AK045749">
    <property type="protein sequence ID" value="BAC32479.2"/>
    <property type="molecule type" value="mRNA"/>
</dbReference>
<dbReference type="EMBL" id="AK048766">
    <property type="protein sequence ID" value="BAC33451.1"/>
    <property type="status" value="ALT_FRAME"/>
    <property type="molecule type" value="mRNA"/>
</dbReference>
<dbReference type="EMBL" id="AK049557">
    <property type="protein sequence ID" value="BAC33809.1"/>
    <property type="status" value="ALT_INIT"/>
    <property type="molecule type" value="mRNA"/>
</dbReference>
<dbReference type="EMBL" id="AK129486">
    <property type="protein sequence ID" value="BAC98296.1"/>
    <property type="molecule type" value="mRNA"/>
</dbReference>
<dbReference type="CCDS" id="CCDS40676.1">
    <molecule id="Q8BX70-1"/>
</dbReference>
<dbReference type="RefSeq" id="NP_796158.2">
    <molecule id="Q8BX70-1"/>
    <property type="nucleotide sequence ID" value="NM_177184.4"/>
</dbReference>
<dbReference type="RefSeq" id="XP_006511289.1">
    <molecule id="Q8BX70-2"/>
    <property type="nucleotide sequence ID" value="XM_006511226.3"/>
</dbReference>
<dbReference type="SMR" id="Q8BX70"/>
<dbReference type="BioGRID" id="236091">
    <property type="interactions" value="6"/>
</dbReference>
<dbReference type="FunCoup" id="Q8BX70">
    <property type="interactions" value="3427"/>
</dbReference>
<dbReference type="IntAct" id="Q8BX70">
    <property type="interactions" value="1"/>
</dbReference>
<dbReference type="MINT" id="Q8BX70"/>
<dbReference type="STRING" id="10090.ENSMUSP00000077040"/>
<dbReference type="GlyGen" id="Q8BX70">
    <property type="glycosylation" value="3 sites, 2 N-linked glycans (2 sites), 1 O-linked glycan (1 site)"/>
</dbReference>
<dbReference type="iPTMnet" id="Q8BX70"/>
<dbReference type="PhosphoSitePlus" id="Q8BX70"/>
<dbReference type="SwissPalm" id="Q8BX70"/>
<dbReference type="jPOST" id="Q8BX70"/>
<dbReference type="PaxDb" id="10090-ENSMUSP00000077040"/>
<dbReference type="PeptideAtlas" id="Q8BX70"/>
<dbReference type="ProteomicsDB" id="297964">
    <molecule id="Q8BX70-1"/>
</dbReference>
<dbReference type="ProteomicsDB" id="297965">
    <molecule id="Q8BX70-2"/>
</dbReference>
<dbReference type="ProteomicsDB" id="297966">
    <molecule id="Q8BX70-3"/>
</dbReference>
<dbReference type="Pumba" id="Q8BX70"/>
<dbReference type="Antibodypedia" id="50681">
    <property type="antibodies" value="14 antibodies from 8 providers"/>
</dbReference>
<dbReference type="Ensembl" id="ENSMUST00000077879.7">
    <molecule id="Q8BX70-1"/>
    <property type="protein sequence ID" value="ENSMUSP00000077040.6"/>
    <property type="gene ID" value="ENSMUSG00000035284.11"/>
</dbReference>
<dbReference type="GeneID" id="320528"/>
<dbReference type="KEGG" id="mmu:320528"/>
<dbReference type="UCSC" id="uc009qms.1">
    <molecule id="Q8BX70-1"/>
    <property type="organism name" value="mouse"/>
</dbReference>
<dbReference type="AGR" id="MGI:2444207"/>
<dbReference type="CTD" id="54832"/>
<dbReference type="MGI" id="MGI:2444207">
    <property type="gene designation" value="Vps13c"/>
</dbReference>
<dbReference type="VEuPathDB" id="HostDB:ENSMUSG00000035284"/>
<dbReference type="eggNOG" id="KOG1809">
    <property type="taxonomic scope" value="Eukaryota"/>
</dbReference>
<dbReference type="GeneTree" id="ENSGT00950000183083"/>
<dbReference type="HOGENOM" id="CLU_000135_1_1_1"/>
<dbReference type="InParanoid" id="Q8BX70"/>
<dbReference type="OMA" id="SGWRPIR"/>
<dbReference type="OrthoDB" id="428159at2759"/>
<dbReference type="PhylomeDB" id="Q8BX70"/>
<dbReference type="TreeFam" id="TF300316"/>
<dbReference type="BioGRID-ORCS" id="320528">
    <property type="hits" value="5 hits in 79 CRISPR screens"/>
</dbReference>
<dbReference type="ChiTaRS" id="Vps13c">
    <property type="organism name" value="mouse"/>
</dbReference>
<dbReference type="PRO" id="PR:Q8BX70"/>
<dbReference type="Proteomes" id="UP000000589">
    <property type="component" value="Chromosome 9"/>
</dbReference>
<dbReference type="RNAct" id="Q8BX70">
    <property type="molecule type" value="protein"/>
</dbReference>
<dbReference type="Bgee" id="ENSMUSG00000035284">
    <property type="expression patterns" value="Expressed in substantia nigra and 122 other cell types or tissues"/>
</dbReference>
<dbReference type="ExpressionAtlas" id="Q8BX70">
    <property type="expression patterns" value="baseline and differential"/>
</dbReference>
<dbReference type="GO" id="GO:0005829">
    <property type="term" value="C:cytosol"/>
    <property type="evidence" value="ECO:0007669"/>
    <property type="project" value="Ensembl"/>
</dbReference>
<dbReference type="GO" id="GO:0032127">
    <property type="term" value="C:dense core granule membrane"/>
    <property type="evidence" value="ECO:0000314"/>
    <property type="project" value="MGI"/>
</dbReference>
<dbReference type="GO" id="GO:0005789">
    <property type="term" value="C:endoplasmic reticulum membrane"/>
    <property type="evidence" value="ECO:0000250"/>
    <property type="project" value="UniProtKB"/>
</dbReference>
<dbReference type="GO" id="GO:0005770">
    <property type="term" value="C:late endosome"/>
    <property type="evidence" value="ECO:0000250"/>
    <property type="project" value="UniProtKB"/>
</dbReference>
<dbReference type="GO" id="GO:0031902">
    <property type="term" value="C:late endosome membrane"/>
    <property type="evidence" value="ECO:0007669"/>
    <property type="project" value="UniProtKB-SubCell"/>
</dbReference>
<dbReference type="GO" id="GO:0005811">
    <property type="term" value="C:lipid droplet"/>
    <property type="evidence" value="ECO:0000250"/>
    <property type="project" value="UniProtKB"/>
</dbReference>
<dbReference type="GO" id="GO:0005765">
    <property type="term" value="C:lysosomal membrane"/>
    <property type="evidence" value="ECO:0007669"/>
    <property type="project" value="UniProtKB-SubCell"/>
</dbReference>
<dbReference type="GO" id="GO:0005764">
    <property type="term" value="C:lysosome"/>
    <property type="evidence" value="ECO:0000250"/>
    <property type="project" value="UniProtKB"/>
</dbReference>
<dbReference type="GO" id="GO:0005741">
    <property type="term" value="C:mitochondrial outer membrane"/>
    <property type="evidence" value="ECO:0007669"/>
    <property type="project" value="UniProtKB-SubCell"/>
</dbReference>
<dbReference type="GO" id="GO:0006869">
    <property type="term" value="P:lipid transport"/>
    <property type="evidence" value="ECO:0007669"/>
    <property type="project" value="UniProtKB-KW"/>
</dbReference>
<dbReference type="GO" id="GO:0007005">
    <property type="term" value="P:mitochondrion organization"/>
    <property type="evidence" value="ECO:0007669"/>
    <property type="project" value="Ensembl"/>
</dbReference>
<dbReference type="GO" id="GO:1905090">
    <property type="term" value="P:negative regulation of type 2 mitophagy"/>
    <property type="evidence" value="ECO:0000250"/>
    <property type="project" value="ParkinsonsUK-UCL"/>
</dbReference>
<dbReference type="GO" id="GO:0032868">
    <property type="term" value="P:response to insulin"/>
    <property type="evidence" value="ECO:0000315"/>
    <property type="project" value="MGI"/>
</dbReference>
<dbReference type="InterPro" id="IPR026847">
    <property type="entry name" value="VPS13"/>
</dbReference>
<dbReference type="InterPro" id="IPR056748">
    <property type="entry name" value="VPS13-like_C"/>
</dbReference>
<dbReference type="InterPro" id="IPR056747">
    <property type="entry name" value="VPS13-like_M"/>
</dbReference>
<dbReference type="InterPro" id="IPR026854">
    <property type="entry name" value="VPS13_N"/>
</dbReference>
<dbReference type="InterPro" id="IPR009543">
    <property type="entry name" value="VPS13_VAB"/>
</dbReference>
<dbReference type="PANTHER" id="PTHR16166:SF125">
    <property type="entry name" value="INTERMEMBRANE LIPID TRANSFER PROTEIN VPS13C"/>
    <property type="match status" value="1"/>
</dbReference>
<dbReference type="PANTHER" id="PTHR16166">
    <property type="entry name" value="VACUOLAR PROTEIN SORTING-ASSOCIATED PROTEIN VPS13"/>
    <property type="match status" value="1"/>
</dbReference>
<dbReference type="Pfam" id="PF25037">
    <property type="entry name" value="VPS13_C"/>
    <property type="match status" value="1"/>
</dbReference>
<dbReference type="Pfam" id="PF25033">
    <property type="entry name" value="VPS13_M"/>
    <property type="match status" value="1"/>
</dbReference>
<dbReference type="Pfam" id="PF12624">
    <property type="entry name" value="VPS13_N"/>
    <property type="match status" value="1"/>
</dbReference>
<dbReference type="Pfam" id="PF25036">
    <property type="entry name" value="VPS13_VAB"/>
    <property type="match status" value="1"/>
</dbReference>
<comment type="function">
    <text evidence="1 2">Mediates the transfer of lipids between membranes at organelle contact sites (By similarity). Necessary for proper mitochondrial function and maintenance of mitochondrial transmembrane potential (By similarity). Involved in the regulation of PINK1/PRKN-mediated mitophagy in response to mitochondrial depolarization (By similarity).</text>
</comment>
<comment type="subcellular location">
    <subcellularLocation>
        <location evidence="2">Mitochondrion outer membrane</location>
    </subcellularLocation>
    <subcellularLocation>
        <location evidence="2">Lipid droplet</location>
    </subcellularLocation>
    <subcellularLocation>
        <location evidence="2">Endoplasmic reticulum membrane</location>
    </subcellularLocation>
    <subcellularLocation>
        <location evidence="2">Lysosome membrane</location>
    </subcellularLocation>
    <subcellularLocation>
        <location evidence="2">Late endosome membrane</location>
    </subcellularLocation>
    <text evidence="2">May localize to endoplasmic reticulum-endolysosome contact sites.</text>
</comment>
<comment type="alternative products">
    <event type="alternative splicing"/>
    <isoform>
        <id>Q8BX70-1</id>
        <name>1</name>
        <sequence type="displayed"/>
    </isoform>
    <isoform>
        <id>Q8BX70-2</id>
        <name evidence="4">2</name>
        <sequence type="described" ref="VSP_052247 VSP_052248"/>
    </isoform>
    <isoform>
        <id>Q8BX70-3</id>
        <name evidence="5">3</name>
        <sequence type="described" ref="VSP_052246"/>
    </isoform>
</comment>
<comment type="domain">
    <text evidence="2">The FFAT motif is required for localization to the endoplasmic reticulum.</text>
</comment>
<comment type="similarity">
    <text evidence="3">Belongs to the VPS13 family.</text>
</comment>
<comment type="sequence caution" evidence="8">
    <conflict type="frameshift">
        <sequence resource="EMBL-CDS" id="BAC33451"/>
    </conflict>
</comment>
<comment type="sequence caution" evidence="8">
    <conflict type="erroneous initiation">
        <sequence resource="EMBL-CDS" id="BAC33809"/>
    </conflict>
</comment>
<comment type="sequence caution" evidence="8">
    <conflict type="erroneous initiation">
        <sequence resource="EMBL-CDS" id="BAE20465"/>
    </conflict>
</comment>
<protein>
    <recommendedName>
        <fullName evidence="2">Intermembrane lipid transfer protein VPS13C</fullName>
    </recommendedName>
    <alternativeName>
        <fullName evidence="8">Vacuolar protein sorting-associated protein 13C</fullName>
    </alternativeName>
</protein>
<evidence type="ECO:0000250" key="1">
    <source>
        <dbReference type="UniProtKB" id="Q07878"/>
    </source>
</evidence>
<evidence type="ECO:0000250" key="2">
    <source>
        <dbReference type="UniProtKB" id="Q709C8"/>
    </source>
</evidence>
<evidence type="ECO:0000255" key="3"/>
<evidence type="ECO:0000269" key="4">
    <source>
    </source>
</evidence>
<evidence type="ECO:0000269" key="5">
    <source>
    </source>
</evidence>
<evidence type="ECO:0000303" key="6">
    <source>
    </source>
</evidence>
<evidence type="ECO:0000303" key="7">
    <source>
    </source>
</evidence>
<evidence type="ECO:0000305" key="8"/>
<evidence type="ECO:0000312" key="9">
    <source>
        <dbReference type="EMBL" id="BAC32479.2"/>
    </source>
</evidence>
<evidence type="ECO:0000312" key="10">
    <source>
        <dbReference type="EMBL" id="BAC33451.1"/>
    </source>
</evidence>
<evidence type="ECO:0000312" key="11">
    <source>
        <dbReference type="EMBL" id="BAC33809.1"/>
    </source>
</evidence>
<evidence type="ECO:0000312" key="12">
    <source>
        <dbReference type="EMBL" id="BAC98296.1"/>
    </source>
</evidence>
<evidence type="ECO:0000312" key="13">
    <source>
        <dbReference type="EMBL" id="BAE20465.1"/>
    </source>
</evidence>
<evidence type="ECO:0000312" key="14">
    <source>
        <dbReference type="MGI" id="MGI:2444207"/>
    </source>
</evidence>
<evidence type="ECO:0007744" key="15">
    <source>
    </source>
</evidence>
<evidence type="ECO:0007744" key="16">
    <source>
    </source>
</evidence>
<evidence type="ECO:0007744" key="17">
    <source>
    </source>
</evidence>
<evidence type="ECO:0007744" key="18">
    <source>
    </source>
</evidence>
<gene>
    <name evidence="14" type="primary">Vps13c</name>
    <name evidence="12" type="synonym">Kiaa3021</name>
</gene>
<organism>
    <name type="scientific">Mus musculus</name>
    <name type="common">Mouse</name>
    <dbReference type="NCBI Taxonomy" id="10090"/>
    <lineage>
        <taxon>Eukaryota</taxon>
        <taxon>Metazoa</taxon>
        <taxon>Chordata</taxon>
        <taxon>Craniata</taxon>
        <taxon>Vertebrata</taxon>
        <taxon>Euteleostomi</taxon>
        <taxon>Mammalia</taxon>
        <taxon>Eutheria</taxon>
        <taxon>Euarchontoglires</taxon>
        <taxon>Glires</taxon>
        <taxon>Rodentia</taxon>
        <taxon>Myomorpha</taxon>
        <taxon>Muroidea</taxon>
        <taxon>Muridae</taxon>
        <taxon>Murinae</taxon>
        <taxon>Mus</taxon>
        <taxon>Mus</taxon>
    </lineage>
</organism>
<feature type="chain" id="PRO_0000262950" description="Intermembrane lipid transfer protein VPS13C">
    <location>
        <begin position="1"/>
        <end position="3748"/>
    </location>
</feature>
<feature type="domain" description="Chorein N-terminal" evidence="3">
    <location>
        <begin position="3"/>
        <end position="115"/>
    </location>
</feature>
<feature type="domain" description="SHR-BD" evidence="3">
    <location>
        <begin position="2760"/>
        <end position="3012"/>
    </location>
</feature>
<feature type="region of interest" description="Required for late endosome/lysosome localization" evidence="2">
    <location>
        <begin position="2410"/>
        <end position="3304"/>
    </location>
</feature>
<feature type="region of interest" description="Required for lipid droplet localization" evidence="2">
    <location>
        <begin position="3305"/>
        <end position="3748"/>
    </location>
</feature>
<feature type="short sequence motif" description="FFAT" evidence="8">
    <location>
        <begin position="876"/>
        <end position="882"/>
    </location>
</feature>
<feature type="modified residue" description="Phosphoserine" evidence="17">
    <location>
        <position position="132"/>
    </location>
</feature>
<feature type="modified residue" description="Phosphothreonine" evidence="2">
    <location>
        <position position="613"/>
    </location>
</feature>
<feature type="modified residue" description="Phosphoserine" evidence="2">
    <location>
        <position position="618"/>
    </location>
</feature>
<feature type="modified residue" description="Phosphothreonine" evidence="2">
    <location>
        <position position="623"/>
    </location>
</feature>
<feature type="modified residue" description="Phosphoserine" evidence="15 17">
    <location>
        <position position="736"/>
    </location>
</feature>
<feature type="modified residue" description="Phosphoserine" evidence="2">
    <location>
        <position position="841"/>
    </location>
</feature>
<feature type="modified residue" description="Phosphoserine" evidence="17">
    <location>
        <position position="871"/>
    </location>
</feature>
<feature type="modified residue" description="Phosphoserine" evidence="17">
    <location>
        <position position="873"/>
    </location>
</feature>
<feature type="modified residue" description="Phosphothreonine" evidence="16">
    <location>
        <position position="1968"/>
    </location>
</feature>
<feature type="modified residue" description="Phosphoserine" evidence="16">
    <location>
        <position position="1974"/>
    </location>
</feature>
<feature type="modified residue" description="Phosphoserine" evidence="17">
    <location>
        <position position="2442"/>
    </location>
</feature>
<feature type="modified residue" description="Omega-N-methylarginine" evidence="18">
    <location>
        <position position="3514"/>
    </location>
</feature>
<feature type="modified residue" description="Omega-N-methylarginine" evidence="2">
    <location>
        <position position="3521"/>
    </location>
</feature>
<feature type="modified residue" description="N6-acetyllysine" evidence="2">
    <location>
        <position position="3533"/>
    </location>
</feature>
<feature type="splice variant" id="VSP_052246" description="In isoform 3." evidence="7">
    <location>
        <begin position="763"/>
        <end position="802"/>
    </location>
</feature>
<feature type="splice variant" id="VSP_052247" description="In isoform 2." evidence="6">
    <original>NHIKKLE</original>
    <variation>QEMGTQE</variation>
    <location>
        <begin position="3617"/>
        <end position="3623"/>
    </location>
</feature>
<feature type="splice variant" id="VSP_052248" description="In isoform 2." evidence="6">
    <location>
        <begin position="3624"/>
        <end position="3748"/>
    </location>
</feature>
<feature type="sequence conflict" description="In Ref. 2; BAC33809." evidence="8" ref="2">
    <original>A</original>
    <variation>S</variation>
    <location>
        <position position="1759"/>
    </location>
</feature>
<feature type="sequence conflict" description="In Ref. 3; BAC98296." evidence="8" ref="3">
    <original>T</original>
    <variation>P</variation>
    <location>
        <position position="2868"/>
    </location>
</feature>
<feature type="sequence conflict" description="In Ref. 3; BAC98296." evidence="8" ref="3">
    <original>R</original>
    <variation>G</variation>
    <location>
        <position position="2916"/>
    </location>
</feature>
<sequence>MVLESVVADLLNRFLGDYVENLNKSQLKLGIWGGNVALDNLQIKENALSELDVPFKVKAGQIDKLTLKIPWKNLYGEAVVATLEGLYLLVVPGASIKYDAEKEEKSLQDIKQKELCRIEEALQKAAEKGAHSGEFMYGLENLLYKDVKPGRKRKKHKKHFKKRFKGLDRSKDKPKEAKKDTFLEKLATQVIKNVQVKITDIHIKYEDDITDPERPLSFGVTLREFSLLTTNEHWTPCILNEAEKIIYKLVKLDSLSAYWNVGCCMSYRGSREHILEQLKREILTSTNIPPDHQYIFQPISASAKLYMNPGAESELKTPKLDGNVEVQNIAIELTKPQYLSMIDFLESLDYMVRNAPYRKYKPCLPLHTNCRQWWKYAIDSVLEVHIRRYTQPWSWSNIKNHRQLLKSYKMAYKTKLTQAKVSEEIQKQIQDLEKSLDVFNIILVRQQAQVEVIHSGQKLRKKSAEAGEKRGWFSGFWGKKESKKRDEESSVPETIDDLMTPEEKDKLFTAIGYSENAYNLALPKQYVAHILTLKLVSTSIIIRENRNVPEILRVQIIGLGTQVSQRPGAQALKIEAKLEHWYVTGLRQQDIVPSLVASIGDTTSSLLKIEFETNPENSPADQTLIVQSQPVEVIYDAKTINAVVEFFQSNKGLDLEQITSATLMKLEEIKERTATGLTHIIETRKVLDLRINLKPSYLIIPQTGFHHEKSNLLILDFGTFQLNSKDQGAQKTANASLEEIIDKAYDKFDVEIRSVQLLFAKAEENWKKCRFQHPSTMHILQPMDIHVELAKAMVEKDVRMAKFKVSGGLPLMHVRISDQKIKDALCLINSIPLPQKSSTPSPERQVASIPVLSGGTKALLGTSLLLDGVESESDEEFFDAEDGDSQAARTVKASELKKAAEVPNEELVSLLLKFEIKEVVLELTKQQKEEETILVFNVTQLGTEATMRTFDLTAVSYLRKISLDYHDIKGSRKKPIHLISSSDRPGLDLLKVEYIKVDRNGPSFQTTFEKTEQTVKVAFSSLNLLLQTQALLSSLNYLTTVIPSDSQNTGVAKEVQAMPEKQKNSPLQKVMVPSRDSDVIGFRLFAKLNAFCVTVCDEKSNIAEIKIQGLDSSLSLQSKKQSLFARLENIIVTDVDPKTIHKKAVSIVGNEVFRFNLDLYPDATEGDSYTDMSTVDGVVALHVGCIQIVYLHKFLMSLLSFLNNFQVAKEALSAATAQAAEKAATSVKDLAQRSFRVSVDIDLKAPVIVIPQSSLSTNAVVVDLGLIRVHNRFSLVSGEDTANPPVIDKMEVQLTKLKLSRTAIQPGTSHPDIQLLHPINLEFFVSRNLAANWYHKVPVVEIKGRLDSMNVSLNQEDLNLLFRILAENLGEATEDLDKGKPRIQERGETKACREVSTPQDVHTTQGVPAARVEETRPVDIINVLLNFEIKEVVVTLMKKAERKGSPFHELKILHLGMEAKVKAHDMTAAAYLRNISMRCFHFPDSKGEPLRIVNTSDVSDGILLKLLFIKADSDGPDFKTIHDNTKQKLKVSFSSLDLVLHLEALLSLMDFLSSAIPSSDSSSSEKEPELKPLVGESRSLAIRAVPSSYEGDAFDLKITAELNAFNIFICDQKSNIAEIKIHGMDASISVKPKQTDVFARLKNIIVMNVDSLSIHKKAVSILGDEVFRFQMSLYPDATEGENYGDMSKVDGRLSLKVGCIQIVYVHKFFMSLLSFLNNFQAAKEALSTATVQAAERAASSVKDLAQKSFRLLMDIDLKAPVITIPQSSVSPNVVIADLGLIRVENKFSLVSVEQLALPPVADEMSIQLTQLKLARTVLQADSPQHDVEILKPVNMLLCIQRNLSAAWYTQIPGMEIKGELKPMQVALSQDDLTVLMKILLENLGEASSQPSPTQYAQEAARVKRDTRSGPDYLKEQELADPKPPGDQTVTLQFDFHFDSLSIILYNSDSSQEPRLSFHNDSFRLGELTLHLMASAGKMFKDGSMNVSLKLKTCTLDDLREGIERATSRMIDKKNDQDNNSSMIDISYSQDKNGSQVDAVLDKLYVCASVEFLMTVADFFIKAMPQSPENIAKEIQIPSRQTAAGRVKMEKDDSVRPNMTLKAMITDPEVVFVASLTKADAPALTASFQCNLSLSTSKLEQMMEASVRDLKVLACPFLRERRGKSITTVLQPCSLFMEKCTWASGKQNINIVVKEFVIKISPIILNTVMTIMAAMSPKTKEDEWKDTPKETDNLWAVKSITDYNSWFLGVDMATEVTENFRDSEHPSIEENCVVAVESVQVTLECGLGHRTVPLLLAESKFSGNIKNWTSLMAAAADMTLEVHYYNETHAVWEPLIERVEGNKPWSLKLNVKKNPIQDKSLMPGDDFIPEPQTAVHISSGATMNITISKSCLNVFSNLAKGFSEGAASTFDYSLKDRAPFTVKNALGVPMKVQPNRNLKVMGSPEKSDIYDVGAGQHLELDYASLEPSRQGKLSILSRQESSLFTLTFVPYGYTEVASVPVARPGRRLYNVRNPSASHSDSVLVQIDATEGNKVVTLRSPLQIKNHFSIAFIIYKFVKNVKLLERIGIARPEEEFHVPLDSYRCQLYVQPAGGLEQQYTHSSTYISWKEELHRSREVRCMLQCPAVEVSFLPLIVNTVALPDELSYIGAHGEDWDPAYVIHLYPPLTLRNLLPYSLRYLLEGTAETHELAEGSSADVLHSRISGEIIELVLVKYLGKNWNGHFRICDTLPEFFLVCFSSDTAEVMTVDLSVHVRRIGCRMELSVFSPYWLINKTSRVLQYRSEEIHVKHPADFRDIILFSFKKKNIFSKNKVQLKISTSAWSNGFSLDTVGSYGCVKCPATNMEYLVGVSIKMSSFNLSRVVTLTPFCTVANKSSLDLEVGEIASDGSIPTNKWHYVASSECIPFWPENLSGKLCVRVVGYEGSSKPFFYNRQDNGTLLSLEDLNGGILVDINTAEHSTVITFSDYHEGSAPALIMNHTQWDVLTYKQSGSQEELVLLPGETRLFAWADPTGIRKLTWNYAANFGEHDLLKDECGQFPYDANIQIHWVSFLDGRQRVLLFTDDVALVSKALQAEEMEQADHEVALSLHSLGLSLVNNENKQEVSYVGITSSGVVWEMKPKQKWKPFSQKQIMSLEQAYSKRLASQDRGWVKLDSNFEVNFDKVPMEMRLPIRCPIKRDFLSGIQVEFKQSPHQRSLRARLYWLQVDNQLPGTMFPVVFHPVAPPKSIALDSEPKPFIDVSVITRFNEYSKVLQFKYFMVLIQEMALKVDQGFLGAVISLFTPTTDPEAERKRTKLIQQDIDALNTELMESSMTDMSILSFFEHFHISPVKLHLSLSLGSGGEESDKEKQEMIAIHSVNLLLKSIGATLTDVDDLIFKLAYYEIRYQFYKRDQLMWSVVRHYSEQFLKQMYVLVLGLDVLGNPFGLIRGLSEGVEALFYEPFQGAVQGPEEFAEGLVIGVRSLVGHTVGGAAGVVSRITGSVGKGLAAITMDKEYQQKRREEMGRQPKDFGDSLARGGKGFLRGVVGGVTGIITKPVEGAKKEGAAGFFKGIGKGLVGAVARPTGGIIDMASSTFQGIQRVAESTEEVSSLRPPRLIHEDGIIRPYDRQESEGSDLLENHIKKLEGEAYQFHCAVPGNKRAVLMITNRRALFIKEVEILGHMSVDWQCLFEDFVCPPEVSENLLKISVKEQGLFHKKDSANIGHLRKIYLKDPITAKRAFDAIESAQSARQQQKLMRQSSVKLLRPQGPS</sequence>
<keyword id="KW-0007">Acetylation</keyword>
<keyword id="KW-0025">Alternative splicing</keyword>
<keyword id="KW-0256">Endoplasmic reticulum</keyword>
<keyword id="KW-0967">Endosome</keyword>
<keyword id="KW-0551">Lipid droplet</keyword>
<keyword id="KW-0445">Lipid transport</keyword>
<keyword id="KW-0458">Lysosome</keyword>
<keyword id="KW-0472">Membrane</keyword>
<keyword id="KW-0488">Methylation</keyword>
<keyword id="KW-0496">Mitochondrion</keyword>
<keyword id="KW-1000">Mitochondrion outer membrane</keyword>
<keyword id="KW-0597">Phosphoprotein</keyword>
<keyword id="KW-1185">Reference proteome</keyword>
<keyword id="KW-0813">Transport</keyword>
<name>VP13C_MOUSE</name>